<protein>
    <recommendedName>
        <fullName>Phenoloxidase 2</fullName>
        <shortName>PO A3</shortName>
        <ecNumber>1.14.18.1</ecNumber>
    </recommendedName>
    <alternativeName>
        <fullName>Phenoloxidase subunit A3</fullName>
    </alternativeName>
    <alternativeName>
        <fullName>Processed phenoloxidase A3</fullName>
        <shortName>Pro-phenoloxidase A3</shortName>
    </alternativeName>
</protein>
<accession>Q9V521</accession>
<accession>Q9BLD9</accession>
<organism>
    <name type="scientific">Drosophila melanogaster</name>
    <name type="common">Fruit fly</name>
    <dbReference type="NCBI Taxonomy" id="7227"/>
    <lineage>
        <taxon>Eukaryota</taxon>
        <taxon>Metazoa</taxon>
        <taxon>Ecdysozoa</taxon>
        <taxon>Arthropoda</taxon>
        <taxon>Hexapoda</taxon>
        <taxon>Insecta</taxon>
        <taxon>Pterygota</taxon>
        <taxon>Neoptera</taxon>
        <taxon>Endopterygota</taxon>
        <taxon>Diptera</taxon>
        <taxon>Brachycera</taxon>
        <taxon>Muscomorpha</taxon>
        <taxon>Ephydroidea</taxon>
        <taxon>Drosophilidae</taxon>
        <taxon>Drosophila</taxon>
        <taxon>Sophophora</taxon>
    </lineage>
</organism>
<reference key="1">
    <citation type="journal article" date="2000" name="Science">
        <title>The genome sequence of Drosophila melanogaster.</title>
        <authorList>
            <person name="Adams M.D."/>
            <person name="Celniker S.E."/>
            <person name="Holt R.A."/>
            <person name="Evans C.A."/>
            <person name="Gocayne J.D."/>
            <person name="Amanatides P.G."/>
            <person name="Scherer S.E."/>
            <person name="Li P.W."/>
            <person name="Hoskins R.A."/>
            <person name="Galle R.F."/>
            <person name="George R.A."/>
            <person name="Lewis S.E."/>
            <person name="Richards S."/>
            <person name="Ashburner M."/>
            <person name="Henderson S.N."/>
            <person name="Sutton G.G."/>
            <person name="Wortman J.R."/>
            <person name="Yandell M.D."/>
            <person name="Zhang Q."/>
            <person name="Chen L.X."/>
            <person name="Brandon R.C."/>
            <person name="Rogers Y.-H.C."/>
            <person name="Blazej R.G."/>
            <person name="Champe M."/>
            <person name="Pfeiffer B.D."/>
            <person name="Wan K.H."/>
            <person name="Doyle C."/>
            <person name="Baxter E.G."/>
            <person name="Helt G."/>
            <person name="Nelson C.R."/>
            <person name="Miklos G.L.G."/>
            <person name="Abril J.F."/>
            <person name="Agbayani A."/>
            <person name="An H.-J."/>
            <person name="Andrews-Pfannkoch C."/>
            <person name="Baldwin D."/>
            <person name="Ballew R.M."/>
            <person name="Basu A."/>
            <person name="Baxendale J."/>
            <person name="Bayraktaroglu L."/>
            <person name="Beasley E.M."/>
            <person name="Beeson K.Y."/>
            <person name="Benos P.V."/>
            <person name="Berman B.P."/>
            <person name="Bhandari D."/>
            <person name="Bolshakov S."/>
            <person name="Borkova D."/>
            <person name="Botchan M.R."/>
            <person name="Bouck J."/>
            <person name="Brokstein P."/>
            <person name="Brottier P."/>
            <person name="Burtis K.C."/>
            <person name="Busam D.A."/>
            <person name="Butler H."/>
            <person name="Cadieu E."/>
            <person name="Center A."/>
            <person name="Chandra I."/>
            <person name="Cherry J.M."/>
            <person name="Cawley S."/>
            <person name="Dahlke C."/>
            <person name="Davenport L.B."/>
            <person name="Davies P."/>
            <person name="de Pablos B."/>
            <person name="Delcher A."/>
            <person name="Deng Z."/>
            <person name="Mays A.D."/>
            <person name="Dew I."/>
            <person name="Dietz S.M."/>
            <person name="Dodson K."/>
            <person name="Doup L.E."/>
            <person name="Downes M."/>
            <person name="Dugan-Rocha S."/>
            <person name="Dunkov B.C."/>
            <person name="Dunn P."/>
            <person name="Durbin K.J."/>
            <person name="Evangelista C.C."/>
            <person name="Ferraz C."/>
            <person name="Ferriera S."/>
            <person name="Fleischmann W."/>
            <person name="Fosler C."/>
            <person name="Gabrielian A.E."/>
            <person name="Garg N.S."/>
            <person name="Gelbart W.M."/>
            <person name="Glasser K."/>
            <person name="Glodek A."/>
            <person name="Gong F."/>
            <person name="Gorrell J.H."/>
            <person name="Gu Z."/>
            <person name="Guan P."/>
            <person name="Harris M."/>
            <person name="Harris N.L."/>
            <person name="Harvey D.A."/>
            <person name="Heiman T.J."/>
            <person name="Hernandez J.R."/>
            <person name="Houck J."/>
            <person name="Hostin D."/>
            <person name="Houston K.A."/>
            <person name="Howland T.J."/>
            <person name="Wei M.-H."/>
            <person name="Ibegwam C."/>
            <person name="Jalali M."/>
            <person name="Kalush F."/>
            <person name="Karpen G.H."/>
            <person name="Ke Z."/>
            <person name="Kennison J.A."/>
            <person name="Ketchum K.A."/>
            <person name="Kimmel B.E."/>
            <person name="Kodira C.D."/>
            <person name="Kraft C.L."/>
            <person name="Kravitz S."/>
            <person name="Kulp D."/>
            <person name="Lai Z."/>
            <person name="Lasko P."/>
            <person name="Lei Y."/>
            <person name="Levitsky A.A."/>
            <person name="Li J.H."/>
            <person name="Li Z."/>
            <person name="Liang Y."/>
            <person name="Lin X."/>
            <person name="Liu X."/>
            <person name="Mattei B."/>
            <person name="McIntosh T.C."/>
            <person name="McLeod M.P."/>
            <person name="McPherson D."/>
            <person name="Merkulov G."/>
            <person name="Milshina N.V."/>
            <person name="Mobarry C."/>
            <person name="Morris J."/>
            <person name="Moshrefi A."/>
            <person name="Mount S.M."/>
            <person name="Moy M."/>
            <person name="Murphy B."/>
            <person name="Murphy L."/>
            <person name="Muzny D.M."/>
            <person name="Nelson D.L."/>
            <person name="Nelson D.R."/>
            <person name="Nelson K.A."/>
            <person name="Nixon K."/>
            <person name="Nusskern D.R."/>
            <person name="Pacleb J.M."/>
            <person name="Palazzolo M."/>
            <person name="Pittman G.S."/>
            <person name="Pan S."/>
            <person name="Pollard J."/>
            <person name="Puri V."/>
            <person name="Reese M.G."/>
            <person name="Reinert K."/>
            <person name="Remington K."/>
            <person name="Saunders R.D.C."/>
            <person name="Scheeler F."/>
            <person name="Shen H."/>
            <person name="Shue B.C."/>
            <person name="Siden-Kiamos I."/>
            <person name="Simpson M."/>
            <person name="Skupski M.P."/>
            <person name="Smith T.J."/>
            <person name="Spier E."/>
            <person name="Spradling A.C."/>
            <person name="Stapleton M."/>
            <person name="Strong R."/>
            <person name="Sun E."/>
            <person name="Svirskas R."/>
            <person name="Tector C."/>
            <person name="Turner R."/>
            <person name="Venter E."/>
            <person name="Wang A.H."/>
            <person name="Wang X."/>
            <person name="Wang Z.-Y."/>
            <person name="Wassarman D.A."/>
            <person name="Weinstock G.M."/>
            <person name="Weissenbach J."/>
            <person name="Williams S.M."/>
            <person name="Woodage T."/>
            <person name="Worley K.C."/>
            <person name="Wu D."/>
            <person name="Yang S."/>
            <person name="Yao Q.A."/>
            <person name="Ye J."/>
            <person name="Yeh R.-F."/>
            <person name="Zaveri J.S."/>
            <person name="Zhan M."/>
            <person name="Zhang G."/>
            <person name="Zhao Q."/>
            <person name="Zheng L."/>
            <person name="Zheng X.H."/>
            <person name="Zhong F.N."/>
            <person name="Zhong W."/>
            <person name="Zhou X."/>
            <person name="Zhu S.C."/>
            <person name="Zhu X."/>
            <person name="Smith H.O."/>
            <person name="Gibbs R.A."/>
            <person name="Myers E.W."/>
            <person name="Rubin G.M."/>
            <person name="Venter J.C."/>
        </authorList>
    </citation>
    <scope>NUCLEOTIDE SEQUENCE [LARGE SCALE GENOMIC DNA]</scope>
    <source>
        <strain>Berkeley</strain>
    </source>
</reference>
<reference key="2">
    <citation type="journal article" date="2002" name="Genome Biol.">
        <title>Annotation of the Drosophila melanogaster euchromatic genome: a systematic review.</title>
        <authorList>
            <person name="Misra S."/>
            <person name="Crosby M.A."/>
            <person name="Mungall C.J."/>
            <person name="Matthews B.B."/>
            <person name="Campbell K.S."/>
            <person name="Hradecky P."/>
            <person name="Huang Y."/>
            <person name="Kaminker J.S."/>
            <person name="Millburn G.H."/>
            <person name="Prochnik S.E."/>
            <person name="Smith C.D."/>
            <person name="Tupy J.L."/>
            <person name="Whitfield E.J."/>
            <person name="Bayraktaroglu L."/>
            <person name="Berman B.P."/>
            <person name="Bettencourt B.R."/>
            <person name="Celniker S.E."/>
            <person name="de Grey A.D.N.J."/>
            <person name="Drysdale R.A."/>
            <person name="Harris N.L."/>
            <person name="Richter J."/>
            <person name="Russo S."/>
            <person name="Schroeder A.J."/>
            <person name="Shu S.Q."/>
            <person name="Stapleton M."/>
            <person name="Yamada C."/>
            <person name="Ashburner M."/>
            <person name="Gelbart W.M."/>
            <person name="Rubin G.M."/>
            <person name="Lewis S.E."/>
        </authorList>
    </citation>
    <scope>GENOME REANNOTATION</scope>
    <source>
        <strain>Berkeley</strain>
    </source>
</reference>
<reference key="3">
    <citation type="journal article" date="2002" name="Genome Biol.">
        <title>A Drosophila full-length cDNA resource.</title>
        <authorList>
            <person name="Stapleton M."/>
            <person name="Carlson J.W."/>
            <person name="Brokstein P."/>
            <person name="Yu C."/>
            <person name="Champe M."/>
            <person name="George R.A."/>
            <person name="Guarin H."/>
            <person name="Kronmiller B."/>
            <person name="Pacleb J.M."/>
            <person name="Park S."/>
            <person name="Wan K.H."/>
            <person name="Rubin G.M."/>
            <person name="Celniker S.E."/>
        </authorList>
    </citation>
    <scope>NUCLEOTIDE SEQUENCE [LARGE SCALE MRNA]</scope>
    <source>
        <strain>Berkeley</strain>
        <tissue>Head</tissue>
    </source>
</reference>
<reference key="4">
    <citation type="journal article" date="2003" name="Biochem. Genet.">
        <title>Prophenol oxidase A3 in Drosophila melanogaster: activation and the PCR-based cDNA sequence.</title>
        <authorList>
            <person name="Asada N."/>
            <person name="Yokoyama G."/>
            <person name="Kawamoto N."/>
            <person name="Norioka S."/>
            <person name="Hatta T."/>
        </authorList>
    </citation>
    <scope>NUCLEOTIDE SEQUENCE [GENOMIC DNA] OF 1-670</scope>
    <scope>PROTEOLYTIC CLEAVAGE</scope>
    <scope>SUBCELLULAR LOCATION</scope>
    <source>
        <strain>Oregon-R</strain>
        <tissue>Larva</tissue>
        <tissue>Pupae</tissue>
    </source>
</reference>
<reference key="5">
    <citation type="journal article" date="2009" name="Insect Mol. Biol.">
        <title>Identification of the gene encoding pro-phenoloxidase A(3) in the fruitfly, Drosophila melanogaster.</title>
        <authorList>
            <person name="Asano T."/>
            <person name="Takebuchi K."/>
        </authorList>
    </citation>
    <scope>SUBCELLULAR LOCATION</scope>
    <scope>DEVELOPMENTAL STAGE</scope>
</reference>
<gene>
    <name type="primary">PPO2</name>
    <name type="synonym">proPo-A3</name>
    <name type="synonym">proPO45</name>
    <name type="ORF">CG8193</name>
</gene>
<proteinExistence type="evidence at protein level"/>
<feature type="propeptide" id="PRO_0000035907">
    <location>
        <begin position="1"/>
        <end position="50"/>
    </location>
</feature>
<feature type="chain" id="PRO_0000035908" description="Phenoloxidase 2">
    <location>
        <begin position="51"/>
        <end position="684"/>
    </location>
</feature>
<feature type="active site" description="Proton acceptor" evidence="2">
    <location>
        <position position="350"/>
    </location>
</feature>
<feature type="binding site" evidence="3">
    <location>
        <position position="208"/>
    </location>
    <ligand>
        <name>Cu cation</name>
        <dbReference type="ChEBI" id="CHEBI:23378"/>
        <label>A</label>
    </ligand>
</feature>
<feature type="binding site" evidence="3">
    <location>
        <position position="212"/>
    </location>
    <ligand>
        <name>Cu cation</name>
        <dbReference type="ChEBI" id="CHEBI:23378"/>
        <label>A</label>
    </ligand>
</feature>
<feature type="binding site" evidence="3">
    <location>
        <position position="238"/>
    </location>
    <ligand>
        <name>Cu cation</name>
        <dbReference type="ChEBI" id="CHEBI:23378"/>
        <label>A</label>
    </ligand>
</feature>
<feature type="binding site" evidence="3">
    <location>
        <position position="365"/>
    </location>
    <ligand>
        <name>Cu cation</name>
        <dbReference type="ChEBI" id="CHEBI:23378"/>
        <label>B</label>
    </ligand>
</feature>
<feature type="binding site" evidence="3">
    <location>
        <position position="369"/>
    </location>
    <ligand>
        <name>Cu cation</name>
        <dbReference type="ChEBI" id="CHEBI:23378"/>
        <label>B</label>
    </ligand>
</feature>
<feature type="binding site" evidence="3">
    <location>
        <position position="405"/>
    </location>
    <ligand>
        <name>Cu cation</name>
        <dbReference type="ChEBI" id="CHEBI:23378"/>
        <label>B</label>
    </ligand>
</feature>
<feature type="glycosylation site" description="N-linked (GlcNAc...) asparagine" evidence="4">
    <location>
        <position position="448"/>
    </location>
</feature>
<feature type="glycosylation site" description="N-linked (GlcNAc...) asparagine" evidence="4">
    <location>
        <position position="492"/>
    </location>
</feature>
<feature type="glycosylation site" description="N-linked (GlcNAc...) asparagine" evidence="4">
    <location>
        <position position="665"/>
    </location>
</feature>
<feature type="glycosylation site" description="N-linked (GlcNAc...) asparagine" evidence="4">
    <location>
        <position position="677"/>
    </location>
</feature>
<feature type="disulfide bond" evidence="3">
    <location>
        <begin position="581"/>
        <end position="623"/>
    </location>
</feature>
<feature type="disulfide bond" evidence="3">
    <location>
        <begin position="583"/>
        <end position="630"/>
    </location>
</feature>
<keyword id="KW-0186">Copper</keyword>
<keyword id="KW-1015">Disulfide bond</keyword>
<keyword id="KW-0325">Glycoprotein</keyword>
<keyword id="KW-0470">Melanin biosynthesis</keyword>
<keyword id="KW-0479">Metal-binding</keyword>
<keyword id="KW-0503">Monooxygenase</keyword>
<keyword id="KW-0560">Oxidoreductase</keyword>
<keyword id="KW-1185">Reference proteome</keyword>
<keyword id="KW-0964">Secreted</keyword>
<keyword id="KW-0865">Zymogen</keyword>
<sequence>MADKKNLLLLFDHPTEPVFMDKGKRVTVFDVPDSFLTDRYRPISNEVQSRVGDKVEQRVPVREISIPDLRIPMSLGRDEQFSLFLPKHRRIAGRLIDIFMNMRSVDDLQSVAVYARDRVNPVLFNYALSVALLHRPDTQGLDLPSFSQTFPDRFIDSQVIRKMREESFVVQPGSRMPITIPRDYTASDLDPEHRLWYFREDLGINLHHWHWHLVYPFEASDRSIVAKDRRGELFYYMHQQVIARYNAERFSNNLARVLPFNNLRDPIAEGYFPKMDSLVASRAWPPRFESTRLSDLNRESDQLNVEIGDLERWRDRIYEAIHQGFVMDERGNRVPLDEATGIDTLGNMIESSILSPNRVLYGDLHNNGHTFISYAHDPTSKHLESFGVMGDVSTAMRDPVFYKWHSYIDRIFQEHKSRLPAYTENQLNYPGVSIAGIQVDTNGGRPNNLTTFWQQSDVDMSRGFDFLPRGNVFARFTHLQHLPFTYTISLNNDSGAQRFGYVRIFMAPKNDERGQPMLMRDQRSMMIELDKFVTSLNPGPNTIRRRSTESSVTIPFERTFRNLDANRPAAGTPEELEFNFCGCGWPNHMLVPKGLPEGLQCVLFIMVSNYENDRIDQQLVGRCSDAASYCGVRDRLYPDRQSMGFPFDRLPRSGVDRLVNFLTPNMSIVDVNIRHENRTVQRPN</sequence>
<evidence type="ECO:0000250" key="1"/>
<evidence type="ECO:0000250" key="2">
    <source>
        <dbReference type="UniProtKB" id="Q8MZM3"/>
    </source>
</evidence>
<evidence type="ECO:0000250" key="3">
    <source>
        <dbReference type="UniProtKB" id="Q9ZP19"/>
    </source>
</evidence>
<evidence type="ECO:0000255" key="4"/>
<evidence type="ECO:0000269" key="5">
    <source>
    </source>
</evidence>
<evidence type="ECO:0000269" key="6">
    <source>
    </source>
</evidence>
<evidence type="ECO:0000305" key="7"/>
<name>PPO2_DROME</name>
<comment type="function">
    <text evidence="1">This is a copper-containing oxidase that functions in the formation of pigments such as melanins and other polyphenolic compounds. Catalyzes the rate-limiting conversions of tyrosine to DOPA, DOPA to DOPA-quinone and possibly 5,6 dihydroxyindole to indole-5'6 quinonee (By similarity).</text>
</comment>
<comment type="catalytic activity">
    <reaction>
        <text>2 L-dopa + O2 = 2 L-dopaquinone + 2 H2O</text>
        <dbReference type="Rhea" id="RHEA:34287"/>
        <dbReference type="ChEBI" id="CHEBI:15377"/>
        <dbReference type="ChEBI" id="CHEBI:15379"/>
        <dbReference type="ChEBI" id="CHEBI:57504"/>
        <dbReference type="ChEBI" id="CHEBI:57924"/>
        <dbReference type="EC" id="1.14.18.1"/>
    </reaction>
</comment>
<comment type="catalytic activity">
    <reaction>
        <text>L-tyrosine + O2 = L-dopaquinone + H2O</text>
        <dbReference type="Rhea" id="RHEA:18117"/>
        <dbReference type="ChEBI" id="CHEBI:15377"/>
        <dbReference type="ChEBI" id="CHEBI:15379"/>
        <dbReference type="ChEBI" id="CHEBI:57924"/>
        <dbReference type="ChEBI" id="CHEBI:58315"/>
        <dbReference type="EC" id="1.14.18.1"/>
    </reaction>
</comment>
<comment type="cofactor">
    <cofactor evidence="3">
        <name>Cu(2+)</name>
        <dbReference type="ChEBI" id="CHEBI:29036"/>
    </cofactor>
    <text evidence="3">Binds 2 copper ions per subunit.</text>
</comment>
<comment type="subcellular location">
    <subcellularLocation>
        <location evidence="5 6">Secreted</location>
    </subcellularLocation>
    <text>Expressed in larval hemolymph.</text>
</comment>
<comment type="developmental stage">
    <text evidence="6">Expression is high during the larval stage, predominantly in the feeding and wandering larvae.</text>
</comment>
<comment type="PTM">
    <text evidence="5">Upon activation, a trypsin type protease cleaves prophenol oxidase to yield the active enzyme.</text>
</comment>
<comment type="similarity">
    <text evidence="7">Belongs to the tyrosinase family.</text>
</comment>
<comment type="sequence caution" evidence="7">
    <conflict type="miscellaneous discrepancy">
        <sequence resource="EMBL-CDS" id="BAB43866"/>
    </conflict>
    <text>Chimeric cDNA. It is a chimera between Dox-A3 and PPO2.</text>
</comment>
<dbReference type="EC" id="1.14.18.1"/>
<dbReference type="EMBL" id="AE013599">
    <property type="protein sequence ID" value="AAF59001.1"/>
    <property type="molecule type" value="Genomic_DNA"/>
</dbReference>
<dbReference type="EMBL" id="AY060652">
    <property type="protein sequence ID" value="AAL28200.1"/>
    <property type="molecule type" value="mRNA"/>
</dbReference>
<dbReference type="EMBL" id="AB055857">
    <property type="protein sequence ID" value="BAB43866.1"/>
    <property type="status" value="ALT_SEQ"/>
    <property type="molecule type" value="Genomic_DNA"/>
</dbReference>
<dbReference type="RefSeq" id="NP_610443.1">
    <property type="nucleotide sequence ID" value="NM_136599.4"/>
</dbReference>
<dbReference type="SMR" id="Q9V521"/>
<dbReference type="BioGRID" id="61748">
    <property type="interactions" value="9"/>
</dbReference>
<dbReference type="FunCoup" id="Q9V521">
    <property type="interactions" value="2"/>
</dbReference>
<dbReference type="IntAct" id="Q9V521">
    <property type="interactions" value="3"/>
</dbReference>
<dbReference type="STRING" id="7227.FBpp0087744"/>
<dbReference type="GlyCosmos" id="Q9V521">
    <property type="glycosylation" value="4 sites, No reported glycans"/>
</dbReference>
<dbReference type="GlyGen" id="Q9V521">
    <property type="glycosylation" value="4 sites"/>
</dbReference>
<dbReference type="PaxDb" id="7227-FBpp0087744"/>
<dbReference type="EnsemblMetazoa" id="FBtr0088663">
    <property type="protein sequence ID" value="FBpp0087744"/>
    <property type="gene ID" value="FBgn0033367"/>
</dbReference>
<dbReference type="GeneID" id="35910"/>
<dbReference type="KEGG" id="dme:Dmel_CG8193"/>
<dbReference type="UCSC" id="CG8193-RA">
    <property type="organism name" value="d. melanogaster"/>
</dbReference>
<dbReference type="AGR" id="FB:FBgn0033367"/>
<dbReference type="CTD" id="35910"/>
<dbReference type="FlyBase" id="FBgn0033367">
    <property type="gene designation" value="PPO2"/>
</dbReference>
<dbReference type="VEuPathDB" id="VectorBase:FBgn0033367"/>
<dbReference type="eggNOG" id="ENOG502QQCG">
    <property type="taxonomic scope" value="Eukaryota"/>
</dbReference>
<dbReference type="GeneTree" id="ENSGT00940000165243"/>
<dbReference type="HOGENOM" id="CLU_012213_0_1_1"/>
<dbReference type="InParanoid" id="Q9V521"/>
<dbReference type="OMA" id="YYMHEQI"/>
<dbReference type="OrthoDB" id="8119704at2759"/>
<dbReference type="PhylomeDB" id="Q9V521"/>
<dbReference type="SignaLink" id="Q9V521"/>
<dbReference type="BioGRID-ORCS" id="35910">
    <property type="hits" value="0 hits in 1 CRISPR screen"/>
</dbReference>
<dbReference type="GenomeRNAi" id="35910"/>
<dbReference type="PRO" id="PR:Q9V521"/>
<dbReference type="Proteomes" id="UP000000803">
    <property type="component" value="Chromosome 2R"/>
</dbReference>
<dbReference type="Bgee" id="FBgn0033367">
    <property type="expression patterns" value="Expressed in crystal cell in dorsal vessel heart and 41 other cell types or tissues"/>
</dbReference>
<dbReference type="GO" id="GO:0005829">
    <property type="term" value="C:cytosol"/>
    <property type="evidence" value="ECO:0000314"/>
    <property type="project" value="FlyBase"/>
</dbReference>
<dbReference type="GO" id="GO:0005576">
    <property type="term" value="C:extracellular region"/>
    <property type="evidence" value="ECO:0000314"/>
    <property type="project" value="UniProtKB"/>
</dbReference>
<dbReference type="GO" id="GO:0005615">
    <property type="term" value="C:extracellular space"/>
    <property type="evidence" value="ECO:0000314"/>
    <property type="project" value="FlyBase"/>
</dbReference>
<dbReference type="GO" id="GO:0004097">
    <property type="term" value="F:catechol oxidase activity"/>
    <property type="evidence" value="ECO:0000314"/>
    <property type="project" value="FlyBase"/>
</dbReference>
<dbReference type="GO" id="GO:0046872">
    <property type="term" value="F:metal ion binding"/>
    <property type="evidence" value="ECO:0007669"/>
    <property type="project" value="UniProtKB-KW"/>
</dbReference>
<dbReference type="GO" id="GO:0004503">
    <property type="term" value="F:tyrosinase activity"/>
    <property type="evidence" value="ECO:0000314"/>
    <property type="project" value="FlyBase"/>
</dbReference>
<dbReference type="GO" id="GO:0050832">
    <property type="term" value="P:defense response to fungus"/>
    <property type="evidence" value="ECO:0000315"/>
    <property type="project" value="FlyBase"/>
</dbReference>
<dbReference type="GO" id="GO:0050830">
    <property type="term" value="P:defense response to Gram-positive bacterium"/>
    <property type="evidence" value="ECO:0000316"/>
    <property type="project" value="FlyBase"/>
</dbReference>
<dbReference type="GO" id="GO:0042417">
    <property type="term" value="P:dopamine metabolic process"/>
    <property type="evidence" value="ECO:0000305"/>
    <property type="project" value="FlyBase"/>
</dbReference>
<dbReference type="GO" id="GO:0042381">
    <property type="term" value="P:hemolymph coagulation"/>
    <property type="evidence" value="ECO:0000314"/>
    <property type="project" value="FlyBase"/>
</dbReference>
<dbReference type="GO" id="GO:0042438">
    <property type="term" value="P:melanin biosynthetic process"/>
    <property type="evidence" value="ECO:0007669"/>
    <property type="project" value="UniProtKB-KW"/>
</dbReference>
<dbReference type="GO" id="GO:0035006">
    <property type="term" value="P:melanization defense response"/>
    <property type="evidence" value="ECO:0000314"/>
    <property type="project" value="FlyBase"/>
</dbReference>
<dbReference type="GO" id="GO:0035011">
    <property type="term" value="P:melanotic encapsulation of foreign target"/>
    <property type="evidence" value="ECO:0000316"/>
    <property type="project" value="FlyBase"/>
</dbReference>
<dbReference type="FunFam" id="1.10.1280.10:FF:000004">
    <property type="entry name" value="Hemocyanin subunit 2"/>
    <property type="match status" value="1"/>
</dbReference>
<dbReference type="FunFam" id="2.60.40.1520:FF:000001">
    <property type="entry name" value="Hemocyanin subunit 2"/>
    <property type="match status" value="1"/>
</dbReference>
<dbReference type="FunFam" id="1.20.1370.10:FF:000001">
    <property type="entry name" value="Phenoloxidase 2"/>
    <property type="match status" value="1"/>
</dbReference>
<dbReference type="Gene3D" id="1.10.1280.10">
    <property type="entry name" value="Di-copper center containing domain from catechol oxidase"/>
    <property type="match status" value="1"/>
</dbReference>
<dbReference type="Gene3D" id="2.60.40.1520">
    <property type="entry name" value="Hemocyanin, C-terminal domain"/>
    <property type="match status" value="1"/>
</dbReference>
<dbReference type="Gene3D" id="1.20.1370.10">
    <property type="entry name" value="Hemocyanin, N-terminal domain"/>
    <property type="match status" value="1"/>
</dbReference>
<dbReference type="InterPro" id="IPR008922">
    <property type="entry name" value="Di-copper_centre_dom_sf"/>
</dbReference>
<dbReference type="InterPro" id="IPR013788">
    <property type="entry name" value="Hemocyanin/hexamerin"/>
</dbReference>
<dbReference type="InterPro" id="IPR000896">
    <property type="entry name" value="Hemocyanin/hexamerin_mid_dom"/>
</dbReference>
<dbReference type="InterPro" id="IPR005203">
    <property type="entry name" value="Hemocyanin_C"/>
</dbReference>
<dbReference type="InterPro" id="IPR037020">
    <property type="entry name" value="Hemocyanin_C_sf"/>
</dbReference>
<dbReference type="InterPro" id="IPR005204">
    <property type="entry name" value="Hemocyanin_N"/>
</dbReference>
<dbReference type="InterPro" id="IPR036697">
    <property type="entry name" value="Hemocyanin_N_sf"/>
</dbReference>
<dbReference type="InterPro" id="IPR014756">
    <property type="entry name" value="Ig_E-set"/>
</dbReference>
<dbReference type="InterPro" id="IPR002227">
    <property type="entry name" value="Tyrosinase_Cu-bd"/>
</dbReference>
<dbReference type="PANTHER" id="PTHR11511">
    <property type="entry name" value="LARVAL STORAGE PROTEIN/PHENOLOXIDASE"/>
    <property type="match status" value="1"/>
</dbReference>
<dbReference type="PANTHER" id="PTHR11511:SF4">
    <property type="entry name" value="PHENOLOXIDASE 2-RELATED"/>
    <property type="match status" value="1"/>
</dbReference>
<dbReference type="Pfam" id="PF03723">
    <property type="entry name" value="Hemocyanin_C"/>
    <property type="match status" value="1"/>
</dbReference>
<dbReference type="Pfam" id="PF00372">
    <property type="entry name" value="Hemocyanin_M"/>
    <property type="match status" value="1"/>
</dbReference>
<dbReference type="Pfam" id="PF03722">
    <property type="entry name" value="Hemocyanin_N"/>
    <property type="match status" value="1"/>
</dbReference>
<dbReference type="PRINTS" id="PR00187">
    <property type="entry name" value="HAEMOCYANIN"/>
</dbReference>
<dbReference type="SUPFAM" id="SSF48056">
    <property type="entry name" value="Di-copper centre-containing domain"/>
    <property type="match status" value="1"/>
</dbReference>
<dbReference type="SUPFAM" id="SSF81296">
    <property type="entry name" value="E set domains"/>
    <property type="match status" value="1"/>
</dbReference>
<dbReference type="SUPFAM" id="SSF48050">
    <property type="entry name" value="Hemocyanin, N-terminal domain"/>
    <property type="match status" value="1"/>
</dbReference>
<dbReference type="PROSITE" id="PS00209">
    <property type="entry name" value="HEMOCYANIN_1"/>
    <property type="match status" value="1"/>
</dbReference>
<dbReference type="PROSITE" id="PS00210">
    <property type="entry name" value="HEMOCYANIN_2"/>
    <property type="match status" value="1"/>
</dbReference>
<dbReference type="PROSITE" id="PS00498">
    <property type="entry name" value="TYROSINASE_2"/>
    <property type="match status" value="1"/>
</dbReference>